<name>ACEA_CORGL</name>
<protein>
    <recommendedName>
        <fullName evidence="6">Isocitrate lyase</fullName>
        <shortName evidence="6">ICL</shortName>
        <ecNumber evidence="5">4.1.3.1</ecNumber>
    </recommendedName>
    <alternativeName>
        <fullName evidence="6">Isocitrase</fullName>
    </alternativeName>
    <alternativeName>
        <fullName evidence="6">Isocitratase</fullName>
    </alternativeName>
</protein>
<reference key="1">
    <citation type="journal article" date="1994" name="J. Bacteriol.">
        <title>Characterization of the isocitrate lyase gene from Corynebacterium glutamicum and biochemical analysis of the enzyme.</title>
        <authorList>
            <person name="Reinscheid D.J."/>
            <person name="Eikmanns B.J."/>
            <person name="Sahm H."/>
        </authorList>
    </citation>
    <scope>NUCLEOTIDE SEQUENCE [GENOMIC DNA]</scope>
    <scope>PROTEIN SEQUENCE OF 2-11</scope>
    <scope>FUNCTION</scope>
    <scope>CATALYTIC ACTIVITY</scope>
    <scope>BIOPHYSICOCHEMICAL PROPERTIES</scope>
    <scope>DISRUPTION PHENOTYPE</scope>
    <scope>ACTIVITY REGULATION</scope>
    <scope>COFACTOR</scope>
    <scope>SUBUNIT</scope>
    <source>
        <strain>ATCC 13032 / DSM 20300 / JCM 1318 / BCRC 11384 / CCUG 27702 / LMG 3730 / NBRC 12168 / NCIMB 10025 / NRRL B-2784 / 534</strain>
    </source>
</reference>
<reference key="2">
    <citation type="journal article" date="2003" name="Appl. Microbiol. Biotechnol.">
        <title>The Corynebacterium glutamicum genome: features and impacts on biotechnological processes.</title>
        <authorList>
            <person name="Ikeda M."/>
            <person name="Nakagawa S."/>
        </authorList>
    </citation>
    <scope>NUCLEOTIDE SEQUENCE [LARGE SCALE GENOMIC DNA]</scope>
    <source>
        <strain>ATCC 13032 / DSM 20300 / JCM 1318 / BCRC 11384 / CCUG 27702 / LMG 3730 / NBRC 12168 / NCIMB 10025 / NRRL B-2784 / 534</strain>
    </source>
</reference>
<reference key="3">
    <citation type="journal article" date="2003" name="J. Biotechnol.">
        <title>The complete Corynebacterium glutamicum ATCC 13032 genome sequence and its impact on the production of L-aspartate-derived amino acids and vitamins.</title>
        <authorList>
            <person name="Kalinowski J."/>
            <person name="Bathe B."/>
            <person name="Bartels D."/>
            <person name="Bischoff N."/>
            <person name="Bott M."/>
            <person name="Burkovski A."/>
            <person name="Dusch N."/>
            <person name="Eggeling L."/>
            <person name="Eikmanns B.J."/>
            <person name="Gaigalat L."/>
            <person name="Goesmann A."/>
            <person name="Hartmann M."/>
            <person name="Huthmacher K."/>
            <person name="Kraemer R."/>
            <person name="Linke B."/>
            <person name="McHardy A.C."/>
            <person name="Meyer F."/>
            <person name="Moeckel B."/>
            <person name="Pfefferle W."/>
            <person name="Puehler A."/>
            <person name="Rey D.A."/>
            <person name="Rueckert C."/>
            <person name="Rupp O."/>
            <person name="Sahm H."/>
            <person name="Wendisch V.F."/>
            <person name="Wiegraebe I."/>
            <person name="Tauch A."/>
        </authorList>
    </citation>
    <scope>NUCLEOTIDE SEQUENCE [LARGE SCALE GENOMIC DNA]</scope>
    <source>
        <strain>ATCC 13032 / DSM 20300 / JCM 1318 / BCRC 11384 / CCUG 27702 / LMG 3730 / NBRC 12168 / NCIMB 10025 / NRRL B-2784 / 534</strain>
    </source>
</reference>
<reference key="4">
    <citation type="journal article" date="2004" name="J. Bacteriol.">
        <title>RamB, a novel transcriptional regulator of genes involved in acetate metabolism of Corynebacterium glutamicum.</title>
        <authorList>
            <person name="Gerstmeir R."/>
            <person name="Cramer A."/>
            <person name="Dangel P."/>
            <person name="Schaffer S."/>
            <person name="Eikmanns B.J."/>
        </authorList>
    </citation>
    <scope>INDUCTION</scope>
    <source>
        <strain>ATCC 13032 / DSM 20300 / JCM 1318 / BCRC 11384 / CCUG 27702 / LMG 3730 / NBRC 12168 / NCIMB 10025 / NRRL B-2784 / 534</strain>
    </source>
</reference>
<reference key="5">
    <citation type="journal article" date="2006" name="J. Bacteriol.">
        <title>Identification of RamA, a novel LuxR-type transcriptional regulator of genes involved in acetate metabolism of Corynebacterium glutamicum.</title>
        <authorList>
            <person name="Cramer A."/>
            <person name="Gerstmeir R."/>
            <person name="Schaffer S."/>
            <person name="Bott M."/>
            <person name="Eikmanns B.J."/>
        </authorList>
    </citation>
    <scope>INDUCTION</scope>
    <source>
        <strain>ATCC 13032 / DSM 20300 / JCM 1318 / BCRC 11384 / CCUG 27702 / LMG 3730 / NBRC 12168 / NCIMB 10025 / NRRL B-2784 / 534</strain>
    </source>
</reference>
<sequence>MSNVGKPRTAQEIQQDWDTNPRWNGITRDYTADQVADLQGSVIEEHTLARRGSEILWDAVTQEGDGYINALGALTGNQAVQQVRAGLKAVYLSGWQVAGDANLSGHTYPDQSLYPANSVPSVVRRINNALLRSDEIARTEGDTSVDNWVVPIVADGEAGFGGALNVYELQKAMIAAGAAGTHWEDQLASEKKCGHLGGKVLIPTQQHIRTLNSARLAADVANTPTVVIARTDAEAATLITSDVDERDQPFITGERTAEGYYHVKNGLEPCIARAKSYAPYADMIWMETGTPDLELAKKFAEGVRSEFPDQLLSYNCSPSFNWSAHLEADEIAKFQKELGAMGFKFQFITLAGFHSLNYGMFDLAYGYAREGMTSFVDLQNREFKAAEERGFTAVKHQREVGAGYFDQIATTVDPNSSTTALKGSTEEGQFHN</sequence>
<gene>
    <name evidence="6" type="primary">aceA</name>
    <name type="ordered locus">Cgl2331</name>
    <name type="ordered locus">cg2560</name>
</gene>
<feature type="initiator methionine" description="Removed" evidence="5">
    <location>
        <position position="1"/>
    </location>
</feature>
<feature type="chain" id="PRO_0000068773" description="Isocitrate lyase">
    <location>
        <begin position="2"/>
        <end position="432"/>
    </location>
</feature>
<feature type="region of interest" description="Disordered" evidence="2">
    <location>
        <begin position="1"/>
        <end position="24"/>
    </location>
</feature>
<feature type="compositionally biased region" description="Polar residues" evidence="2">
    <location>
        <begin position="11"/>
        <end position="22"/>
    </location>
</feature>
<feature type="active site" description="Proton acceptor" evidence="1">
    <location>
        <position position="193"/>
    </location>
</feature>
<feature type="binding site" evidence="1">
    <location>
        <begin position="93"/>
        <end position="95"/>
    </location>
    <ligand>
        <name>substrate</name>
    </ligand>
</feature>
<feature type="binding site" evidence="1">
    <location>
        <position position="155"/>
    </location>
    <ligand>
        <name>Mg(2+)</name>
        <dbReference type="ChEBI" id="CHEBI:18420"/>
    </ligand>
</feature>
<feature type="binding site" evidence="1">
    <location>
        <begin position="194"/>
        <end position="195"/>
    </location>
    <ligand>
        <name>substrate</name>
    </ligand>
</feature>
<feature type="binding site" evidence="1">
    <location>
        <position position="230"/>
    </location>
    <ligand>
        <name>substrate</name>
    </ligand>
</feature>
<feature type="binding site" evidence="1">
    <location>
        <begin position="315"/>
        <end position="319"/>
    </location>
    <ligand>
        <name>substrate</name>
    </ligand>
</feature>
<feature type="binding site" evidence="1">
    <location>
        <position position="349"/>
    </location>
    <ligand>
        <name>substrate</name>
    </ligand>
</feature>
<dbReference type="EC" id="4.1.3.1" evidence="5"/>
<dbReference type="EMBL" id="X75504">
    <property type="protein sequence ID" value="CAA53219.1"/>
    <property type="molecule type" value="Genomic_DNA"/>
</dbReference>
<dbReference type="EMBL" id="BA000036">
    <property type="protein sequence ID" value="BAB99724.1"/>
    <property type="molecule type" value="Genomic_DNA"/>
</dbReference>
<dbReference type="EMBL" id="BX927154">
    <property type="protein sequence ID" value="CAF20674.1"/>
    <property type="molecule type" value="Genomic_DNA"/>
</dbReference>
<dbReference type="PIR" id="I40713">
    <property type="entry name" value="I40713"/>
</dbReference>
<dbReference type="RefSeq" id="NP_601531.1">
    <property type="nucleotide sequence ID" value="NC_003450.3"/>
</dbReference>
<dbReference type="RefSeq" id="WP_003859378.1">
    <property type="nucleotide sequence ID" value="NC_006958.1"/>
</dbReference>
<dbReference type="SMR" id="P42449"/>
<dbReference type="DIP" id="DIP-2898N"/>
<dbReference type="STRING" id="196627.cg2560"/>
<dbReference type="GeneID" id="1020281"/>
<dbReference type="KEGG" id="cgb:cg2560"/>
<dbReference type="KEGG" id="cgl:Cgl2331"/>
<dbReference type="PATRIC" id="fig|196627.13.peg.2264"/>
<dbReference type="eggNOG" id="COG2224">
    <property type="taxonomic scope" value="Bacteria"/>
</dbReference>
<dbReference type="HOGENOM" id="CLU_019214_2_0_11"/>
<dbReference type="OrthoDB" id="8629576at2"/>
<dbReference type="BioCyc" id="CORYNE:G18NG-11928-MONOMER"/>
<dbReference type="UniPathway" id="UPA00703">
    <property type="reaction ID" value="UER00719"/>
</dbReference>
<dbReference type="Proteomes" id="UP000000582">
    <property type="component" value="Chromosome"/>
</dbReference>
<dbReference type="Proteomes" id="UP000001009">
    <property type="component" value="Chromosome"/>
</dbReference>
<dbReference type="GO" id="GO:0004451">
    <property type="term" value="F:isocitrate lyase activity"/>
    <property type="evidence" value="ECO:0007669"/>
    <property type="project" value="UniProtKB-EC"/>
</dbReference>
<dbReference type="GO" id="GO:0046872">
    <property type="term" value="F:metal ion binding"/>
    <property type="evidence" value="ECO:0007669"/>
    <property type="project" value="UniProtKB-KW"/>
</dbReference>
<dbReference type="GO" id="GO:0006097">
    <property type="term" value="P:glyoxylate cycle"/>
    <property type="evidence" value="ECO:0007669"/>
    <property type="project" value="UniProtKB-UniPathway"/>
</dbReference>
<dbReference type="GO" id="GO:0006099">
    <property type="term" value="P:tricarboxylic acid cycle"/>
    <property type="evidence" value="ECO:0007669"/>
    <property type="project" value="UniProtKB-KW"/>
</dbReference>
<dbReference type="CDD" id="cd00377">
    <property type="entry name" value="ICL_PEPM"/>
    <property type="match status" value="1"/>
</dbReference>
<dbReference type="FunFam" id="3.20.20.60:FF:000005">
    <property type="entry name" value="Isocitrate lyase"/>
    <property type="match status" value="1"/>
</dbReference>
<dbReference type="Gene3D" id="3.20.20.60">
    <property type="entry name" value="Phosphoenolpyruvate-binding domains"/>
    <property type="match status" value="1"/>
</dbReference>
<dbReference type="InterPro" id="IPR039556">
    <property type="entry name" value="ICL/PEPM"/>
</dbReference>
<dbReference type="InterPro" id="IPR006254">
    <property type="entry name" value="Isocitrate_lyase"/>
</dbReference>
<dbReference type="InterPro" id="IPR018523">
    <property type="entry name" value="Isocitrate_lyase_ph_CS"/>
</dbReference>
<dbReference type="InterPro" id="IPR015813">
    <property type="entry name" value="Pyrv/PenolPyrv_kinase-like_dom"/>
</dbReference>
<dbReference type="InterPro" id="IPR040442">
    <property type="entry name" value="Pyrv_kinase-like_dom_sf"/>
</dbReference>
<dbReference type="NCBIfam" id="TIGR01346">
    <property type="entry name" value="isocit_lyase"/>
    <property type="match status" value="2"/>
</dbReference>
<dbReference type="NCBIfam" id="NF011645">
    <property type="entry name" value="PRK15063.1"/>
    <property type="match status" value="1"/>
</dbReference>
<dbReference type="PANTHER" id="PTHR21631:SF3">
    <property type="entry name" value="BIFUNCTIONAL GLYOXYLATE CYCLE PROTEIN"/>
    <property type="match status" value="1"/>
</dbReference>
<dbReference type="PANTHER" id="PTHR21631">
    <property type="entry name" value="ISOCITRATE LYASE/MALATE SYNTHASE"/>
    <property type="match status" value="1"/>
</dbReference>
<dbReference type="Pfam" id="PF00463">
    <property type="entry name" value="ICL"/>
    <property type="match status" value="2"/>
</dbReference>
<dbReference type="PIRSF" id="PIRSF001362">
    <property type="entry name" value="Isocit_lyase"/>
    <property type="match status" value="1"/>
</dbReference>
<dbReference type="SUPFAM" id="SSF51621">
    <property type="entry name" value="Phosphoenolpyruvate/pyruvate domain"/>
    <property type="match status" value="1"/>
</dbReference>
<dbReference type="PROSITE" id="PS00161">
    <property type="entry name" value="ISOCITRATE_LYASE"/>
    <property type="match status" value="1"/>
</dbReference>
<keyword id="KW-0170">Cobalt</keyword>
<keyword id="KW-0903">Direct protein sequencing</keyword>
<keyword id="KW-0329">Glyoxylate bypass</keyword>
<keyword id="KW-0456">Lyase</keyword>
<keyword id="KW-0460">Magnesium</keyword>
<keyword id="KW-0464">Manganese</keyword>
<keyword id="KW-0479">Metal-binding</keyword>
<keyword id="KW-1185">Reference proteome</keyword>
<keyword id="KW-0816">Tricarboxylic acid cycle</keyword>
<proteinExistence type="evidence at protein level"/>
<accession>P42449</accession>
<comment type="function">
    <text evidence="5">Involved in the metabolic adaptation in response to environmental changes. Catalyzes the reversible formation of succinate and glyoxylate from isocitrate, a key step of the glyoxylate cycle, which operates as an anaplerotic route for replenishing the tricarboxylic acid cycle during growth on fatty acid substrates.</text>
</comment>
<comment type="catalytic activity">
    <reaction evidence="5">
        <text>D-threo-isocitrate = glyoxylate + succinate</text>
        <dbReference type="Rhea" id="RHEA:13245"/>
        <dbReference type="ChEBI" id="CHEBI:15562"/>
        <dbReference type="ChEBI" id="CHEBI:30031"/>
        <dbReference type="ChEBI" id="CHEBI:36655"/>
        <dbReference type="EC" id="4.1.3.1"/>
    </reaction>
</comment>
<comment type="cofactor">
    <cofactor evidence="5">
        <name>Mg(2+)</name>
        <dbReference type="ChEBI" id="CHEBI:18420"/>
    </cofactor>
    <text evidence="5">Divalent metal cations. Mn(2+) or Co(2+) can be used.</text>
</comment>
<comment type="activity regulation">
    <text evidence="5">Inhibited by 3-phosphoglycerate, 6-phosphogluconate, phosphoenolpyruvate (PEP), fructose 1,6-bisphosphate, glycolate, oxalate, and itaconate.</text>
</comment>
<comment type="biophysicochemical properties">
    <kinetics>
        <KM evidence="5">0.28 mM for threo-D-isocitrate</KM>
        <KM evidence="5">0.34 mM for glyoxylate</KM>
        <KM evidence="5">0.61 mM for succinate</KM>
    </kinetics>
    <phDependence>
        <text evidence="5">Optimum pH is 7.3.</text>
    </phDependence>
    <temperatureDependence>
        <text evidence="5">Optimum temperature is 40 degrees Celsius. Above 45 degrees Celsius, the enzyme is denaturated.</text>
    </temperatureDependence>
</comment>
<comment type="pathway">
    <text evidence="8">Carbohydrate metabolism; glyoxylate cycle; (S)-malate from isocitrate: step 1/2.</text>
</comment>
<comment type="subunit">
    <text evidence="5">Homotetramer.</text>
</comment>
<comment type="induction">
    <text evidence="3 4">Activated by RamA and repressed by RamB.</text>
</comment>
<comment type="disruption phenotype">
    <text evidence="5">Cells lacking this gene are unable to grow on acetate as carbon source.</text>
</comment>
<comment type="similarity">
    <text evidence="7">Belongs to the isocitrate lyase/PEP mutase superfamily. Isocitrate lyase family.</text>
</comment>
<organism>
    <name type="scientific">Corynebacterium glutamicum (strain ATCC 13032 / DSM 20300 / JCM 1318 / BCRC 11384 / CCUG 27702 / LMG 3730 / NBRC 12168 / NCIMB 10025 / NRRL B-2784 / 534)</name>
    <dbReference type="NCBI Taxonomy" id="196627"/>
    <lineage>
        <taxon>Bacteria</taxon>
        <taxon>Bacillati</taxon>
        <taxon>Actinomycetota</taxon>
        <taxon>Actinomycetes</taxon>
        <taxon>Mycobacteriales</taxon>
        <taxon>Corynebacteriaceae</taxon>
        <taxon>Corynebacterium</taxon>
    </lineage>
</organism>
<evidence type="ECO:0000250" key="1">
    <source>
        <dbReference type="UniProtKB" id="P9WKK7"/>
    </source>
</evidence>
<evidence type="ECO:0000256" key="2">
    <source>
        <dbReference type="SAM" id="MobiDB-lite"/>
    </source>
</evidence>
<evidence type="ECO:0000269" key="3">
    <source>
    </source>
</evidence>
<evidence type="ECO:0000269" key="4">
    <source>
    </source>
</evidence>
<evidence type="ECO:0000269" key="5">
    <source>
    </source>
</evidence>
<evidence type="ECO:0000303" key="6">
    <source>
    </source>
</evidence>
<evidence type="ECO:0000305" key="7"/>
<evidence type="ECO:0000305" key="8">
    <source>
    </source>
</evidence>